<keyword id="KW-0067">ATP-binding</keyword>
<keyword id="KW-0143">Chaperone</keyword>
<keyword id="KW-0479">Metal-binding</keyword>
<keyword id="KW-0547">Nucleotide-binding</keyword>
<keyword id="KW-1185">Reference proteome</keyword>
<keyword id="KW-0862">Zinc</keyword>
<evidence type="ECO:0000255" key="1">
    <source>
        <dbReference type="HAMAP-Rule" id="MF_00175"/>
    </source>
</evidence>
<evidence type="ECO:0000255" key="2">
    <source>
        <dbReference type="PROSITE-ProRule" id="PRU01250"/>
    </source>
</evidence>
<gene>
    <name evidence="1" type="primary">clpX</name>
    <name type="ordered locus">Bxeno_A2137</name>
    <name type="ORF">Bxe_A2294</name>
</gene>
<dbReference type="EMBL" id="CP000270">
    <property type="protein sequence ID" value="ABE30675.1"/>
    <property type="molecule type" value="Genomic_DNA"/>
</dbReference>
<dbReference type="RefSeq" id="WP_011488302.1">
    <property type="nucleotide sequence ID" value="NC_007951.1"/>
</dbReference>
<dbReference type="SMR" id="Q13Z14"/>
<dbReference type="STRING" id="266265.Bxe_A2294"/>
<dbReference type="KEGG" id="bxb:DR64_4445"/>
<dbReference type="KEGG" id="bxe:Bxe_A2294"/>
<dbReference type="PATRIC" id="fig|266265.5.peg.2237"/>
<dbReference type="eggNOG" id="COG1219">
    <property type="taxonomic scope" value="Bacteria"/>
</dbReference>
<dbReference type="OrthoDB" id="9804062at2"/>
<dbReference type="Proteomes" id="UP000001817">
    <property type="component" value="Chromosome 1"/>
</dbReference>
<dbReference type="GO" id="GO:0009376">
    <property type="term" value="C:HslUV protease complex"/>
    <property type="evidence" value="ECO:0007669"/>
    <property type="project" value="TreeGrafter"/>
</dbReference>
<dbReference type="GO" id="GO:0005524">
    <property type="term" value="F:ATP binding"/>
    <property type="evidence" value="ECO:0007669"/>
    <property type="project" value="UniProtKB-UniRule"/>
</dbReference>
<dbReference type="GO" id="GO:0016887">
    <property type="term" value="F:ATP hydrolysis activity"/>
    <property type="evidence" value="ECO:0007669"/>
    <property type="project" value="InterPro"/>
</dbReference>
<dbReference type="GO" id="GO:0140662">
    <property type="term" value="F:ATP-dependent protein folding chaperone"/>
    <property type="evidence" value="ECO:0007669"/>
    <property type="project" value="InterPro"/>
</dbReference>
<dbReference type="GO" id="GO:0046983">
    <property type="term" value="F:protein dimerization activity"/>
    <property type="evidence" value="ECO:0007669"/>
    <property type="project" value="InterPro"/>
</dbReference>
<dbReference type="GO" id="GO:0051082">
    <property type="term" value="F:unfolded protein binding"/>
    <property type="evidence" value="ECO:0007669"/>
    <property type="project" value="UniProtKB-UniRule"/>
</dbReference>
<dbReference type="GO" id="GO:0008270">
    <property type="term" value="F:zinc ion binding"/>
    <property type="evidence" value="ECO:0007669"/>
    <property type="project" value="InterPro"/>
</dbReference>
<dbReference type="GO" id="GO:0051301">
    <property type="term" value="P:cell division"/>
    <property type="evidence" value="ECO:0007669"/>
    <property type="project" value="TreeGrafter"/>
</dbReference>
<dbReference type="GO" id="GO:0051603">
    <property type="term" value="P:proteolysis involved in protein catabolic process"/>
    <property type="evidence" value="ECO:0007669"/>
    <property type="project" value="TreeGrafter"/>
</dbReference>
<dbReference type="CDD" id="cd19497">
    <property type="entry name" value="RecA-like_ClpX"/>
    <property type="match status" value="1"/>
</dbReference>
<dbReference type="FunFam" id="1.10.8.60:FF:000002">
    <property type="entry name" value="ATP-dependent Clp protease ATP-binding subunit ClpX"/>
    <property type="match status" value="1"/>
</dbReference>
<dbReference type="FunFam" id="3.40.50.300:FF:000005">
    <property type="entry name" value="ATP-dependent Clp protease ATP-binding subunit ClpX"/>
    <property type="match status" value="1"/>
</dbReference>
<dbReference type="Gene3D" id="1.10.8.60">
    <property type="match status" value="1"/>
</dbReference>
<dbReference type="Gene3D" id="6.20.220.10">
    <property type="entry name" value="ClpX chaperone, C4-type zinc finger domain"/>
    <property type="match status" value="1"/>
</dbReference>
<dbReference type="Gene3D" id="3.40.50.300">
    <property type="entry name" value="P-loop containing nucleotide triphosphate hydrolases"/>
    <property type="match status" value="1"/>
</dbReference>
<dbReference type="HAMAP" id="MF_00175">
    <property type="entry name" value="ClpX"/>
    <property type="match status" value="1"/>
</dbReference>
<dbReference type="InterPro" id="IPR003593">
    <property type="entry name" value="AAA+_ATPase"/>
</dbReference>
<dbReference type="InterPro" id="IPR050052">
    <property type="entry name" value="ATP-dep_Clp_protease_ClpX"/>
</dbReference>
<dbReference type="InterPro" id="IPR003959">
    <property type="entry name" value="ATPase_AAA_core"/>
</dbReference>
<dbReference type="InterPro" id="IPR019489">
    <property type="entry name" value="Clp_ATPase_C"/>
</dbReference>
<dbReference type="InterPro" id="IPR004487">
    <property type="entry name" value="Clp_protease_ATP-bd_su_ClpX"/>
</dbReference>
<dbReference type="InterPro" id="IPR046425">
    <property type="entry name" value="ClpX_bact"/>
</dbReference>
<dbReference type="InterPro" id="IPR027417">
    <property type="entry name" value="P-loop_NTPase"/>
</dbReference>
<dbReference type="InterPro" id="IPR010603">
    <property type="entry name" value="Znf_CppX_C4"/>
</dbReference>
<dbReference type="InterPro" id="IPR038366">
    <property type="entry name" value="Znf_CppX_C4_sf"/>
</dbReference>
<dbReference type="NCBIfam" id="TIGR00382">
    <property type="entry name" value="clpX"/>
    <property type="match status" value="1"/>
</dbReference>
<dbReference type="NCBIfam" id="NF003745">
    <property type="entry name" value="PRK05342.1"/>
    <property type="match status" value="1"/>
</dbReference>
<dbReference type="PANTHER" id="PTHR48102:SF7">
    <property type="entry name" value="ATP-DEPENDENT CLP PROTEASE ATP-BINDING SUBUNIT CLPX-LIKE, MITOCHONDRIAL"/>
    <property type="match status" value="1"/>
</dbReference>
<dbReference type="PANTHER" id="PTHR48102">
    <property type="entry name" value="ATP-DEPENDENT CLP PROTEASE ATP-BINDING SUBUNIT CLPX-LIKE, MITOCHONDRIAL-RELATED"/>
    <property type="match status" value="1"/>
</dbReference>
<dbReference type="Pfam" id="PF07724">
    <property type="entry name" value="AAA_2"/>
    <property type="match status" value="1"/>
</dbReference>
<dbReference type="Pfam" id="PF10431">
    <property type="entry name" value="ClpB_D2-small"/>
    <property type="match status" value="1"/>
</dbReference>
<dbReference type="Pfam" id="PF06689">
    <property type="entry name" value="zf-C4_ClpX"/>
    <property type="match status" value="1"/>
</dbReference>
<dbReference type="SMART" id="SM00382">
    <property type="entry name" value="AAA"/>
    <property type="match status" value="1"/>
</dbReference>
<dbReference type="SMART" id="SM01086">
    <property type="entry name" value="ClpB_D2-small"/>
    <property type="match status" value="1"/>
</dbReference>
<dbReference type="SMART" id="SM00994">
    <property type="entry name" value="zf-C4_ClpX"/>
    <property type="match status" value="1"/>
</dbReference>
<dbReference type="SUPFAM" id="SSF57716">
    <property type="entry name" value="Glucocorticoid receptor-like (DNA-binding domain)"/>
    <property type="match status" value="1"/>
</dbReference>
<dbReference type="SUPFAM" id="SSF52540">
    <property type="entry name" value="P-loop containing nucleoside triphosphate hydrolases"/>
    <property type="match status" value="1"/>
</dbReference>
<dbReference type="PROSITE" id="PS51902">
    <property type="entry name" value="CLPX_ZB"/>
    <property type="match status" value="1"/>
</dbReference>
<protein>
    <recommendedName>
        <fullName evidence="1">ATP-dependent Clp protease ATP-binding subunit ClpX</fullName>
    </recommendedName>
</protein>
<reference key="1">
    <citation type="journal article" date="2006" name="Proc. Natl. Acad. Sci. U.S.A.">
        <title>Burkholderia xenovorans LB400 harbors a multi-replicon, 9.73-Mbp genome shaped for versatility.</title>
        <authorList>
            <person name="Chain P.S.G."/>
            <person name="Denef V.J."/>
            <person name="Konstantinidis K.T."/>
            <person name="Vergez L.M."/>
            <person name="Agullo L."/>
            <person name="Reyes V.L."/>
            <person name="Hauser L."/>
            <person name="Cordova M."/>
            <person name="Gomez L."/>
            <person name="Gonzalez M."/>
            <person name="Land M."/>
            <person name="Lao V."/>
            <person name="Larimer F."/>
            <person name="LiPuma J.J."/>
            <person name="Mahenthiralingam E."/>
            <person name="Malfatti S.A."/>
            <person name="Marx C.J."/>
            <person name="Parnell J.J."/>
            <person name="Ramette A."/>
            <person name="Richardson P."/>
            <person name="Seeger M."/>
            <person name="Smith D."/>
            <person name="Spilker T."/>
            <person name="Sul W.J."/>
            <person name="Tsoi T.V."/>
            <person name="Ulrich L.E."/>
            <person name="Zhulin I.B."/>
            <person name="Tiedje J.M."/>
        </authorList>
    </citation>
    <scope>NUCLEOTIDE SEQUENCE [LARGE SCALE GENOMIC DNA]</scope>
    <source>
        <strain>LB400</strain>
    </source>
</reference>
<proteinExistence type="inferred from homology"/>
<organism>
    <name type="scientific">Paraburkholderia xenovorans (strain LB400)</name>
    <dbReference type="NCBI Taxonomy" id="266265"/>
    <lineage>
        <taxon>Bacteria</taxon>
        <taxon>Pseudomonadati</taxon>
        <taxon>Pseudomonadota</taxon>
        <taxon>Betaproteobacteria</taxon>
        <taxon>Burkholderiales</taxon>
        <taxon>Burkholderiaceae</taxon>
        <taxon>Paraburkholderia</taxon>
    </lineage>
</organism>
<name>CLPX_PARXL</name>
<feature type="chain" id="PRO_1000024536" description="ATP-dependent Clp protease ATP-binding subunit ClpX">
    <location>
        <begin position="1"/>
        <end position="423"/>
    </location>
</feature>
<feature type="domain" description="ClpX-type ZB" evidence="2">
    <location>
        <begin position="3"/>
        <end position="56"/>
    </location>
</feature>
<feature type="binding site" evidence="2">
    <location>
        <position position="15"/>
    </location>
    <ligand>
        <name>Zn(2+)</name>
        <dbReference type="ChEBI" id="CHEBI:29105"/>
    </ligand>
</feature>
<feature type="binding site" evidence="2">
    <location>
        <position position="18"/>
    </location>
    <ligand>
        <name>Zn(2+)</name>
        <dbReference type="ChEBI" id="CHEBI:29105"/>
    </ligand>
</feature>
<feature type="binding site" evidence="2">
    <location>
        <position position="37"/>
    </location>
    <ligand>
        <name>Zn(2+)</name>
        <dbReference type="ChEBI" id="CHEBI:29105"/>
    </ligand>
</feature>
<feature type="binding site" evidence="2">
    <location>
        <position position="40"/>
    </location>
    <ligand>
        <name>Zn(2+)</name>
        <dbReference type="ChEBI" id="CHEBI:29105"/>
    </ligand>
</feature>
<feature type="binding site" evidence="1">
    <location>
        <begin position="122"/>
        <end position="129"/>
    </location>
    <ligand>
        <name>ATP</name>
        <dbReference type="ChEBI" id="CHEBI:30616"/>
    </ligand>
</feature>
<comment type="function">
    <text evidence="1">ATP-dependent specificity component of the Clp protease. It directs the protease to specific substrates. Can perform chaperone functions in the absence of ClpP.</text>
</comment>
<comment type="subunit">
    <text evidence="1">Component of the ClpX-ClpP complex. Forms a hexameric ring that, in the presence of ATP, binds to fourteen ClpP subunits assembled into a disk-like structure with a central cavity, resembling the structure of eukaryotic proteasomes.</text>
</comment>
<comment type="similarity">
    <text evidence="1">Belongs to the ClpX chaperone family.</text>
</comment>
<sequence>MADKKGSNSEKLLYCSFCGKSQHEVKKLIAGPSVFICDECIDLCNEIIRDEAAGAGIEAGLSKSDLPSPQEIREILDQYVIGQERAKKILAVAVYNHYKRLKHLDKKDEIELSKSNILLIGPTGSGKTLLAQTLARLLNVPFVIADATTLTEAGYVGEDVENIIQKLLQNCNYEVDKAQRGIVYIDEIDKISRKSDNPSITRDVSGEGVQQALLKLVEGTMASVPPQGGRKHPNQDFIQVDTTNILFICGGAFDGLEKVIVDRTEKTGIGFGASVKSKQDRDAGEVLREVEPEDLIKFGLIPELIGRLPVVATLGKLDEVALMKILVEPKNALVKQYHKLFNMERVELEIRPAALQAVARKAIRRKTGARGLRSILEQALLDVMYDLPQMKGISKVIIDDNVIDGDGKPLLIYEDAPKVAGSN</sequence>
<accession>Q13Z14</accession>